<organism>
    <name type="scientific">Homo sapiens</name>
    <name type="common">Human</name>
    <dbReference type="NCBI Taxonomy" id="9606"/>
    <lineage>
        <taxon>Eukaryota</taxon>
        <taxon>Metazoa</taxon>
        <taxon>Chordata</taxon>
        <taxon>Craniata</taxon>
        <taxon>Vertebrata</taxon>
        <taxon>Euteleostomi</taxon>
        <taxon>Mammalia</taxon>
        <taxon>Eutheria</taxon>
        <taxon>Euarchontoglires</taxon>
        <taxon>Primates</taxon>
        <taxon>Haplorrhini</taxon>
        <taxon>Catarrhini</taxon>
        <taxon>Hominidae</taxon>
        <taxon>Homo</taxon>
    </lineage>
</organism>
<keyword id="KW-0010">Activator</keyword>
<keyword id="KW-0238">DNA-binding</keyword>
<keyword id="KW-0539">Nucleus</keyword>
<keyword id="KW-0597">Phosphoprotein</keyword>
<keyword id="KW-1267">Proteomics identification</keyword>
<keyword id="KW-1185">Reference proteome</keyword>
<keyword id="KW-0678">Repressor</keyword>
<keyword id="KW-0804">Transcription</keyword>
<keyword id="KW-0805">Transcription regulation</keyword>
<reference key="1">
    <citation type="journal article" date="2000" name="J. Immunol.">
        <title>Repression of IL-2 promoter activity by the novel basic leucine zipper p21SNFT protein.</title>
        <authorList>
            <person name="Iacobelli M."/>
            <person name="Wachsman W."/>
            <person name="McGuire K.L."/>
        </authorList>
    </citation>
    <scope>NUCLEOTIDE SEQUENCE [MRNA]</scope>
    <scope>FUNCTION</scope>
</reference>
<reference key="2">
    <citation type="journal article" date="2006" name="Nature">
        <title>The DNA sequence and biological annotation of human chromosome 1.</title>
        <authorList>
            <person name="Gregory S.G."/>
            <person name="Barlow K.F."/>
            <person name="McLay K.E."/>
            <person name="Kaul R."/>
            <person name="Swarbreck D."/>
            <person name="Dunham A."/>
            <person name="Scott C.E."/>
            <person name="Howe K.L."/>
            <person name="Woodfine K."/>
            <person name="Spencer C.C.A."/>
            <person name="Jones M.C."/>
            <person name="Gillson C."/>
            <person name="Searle S."/>
            <person name="Zhou Y."/>
            <person name="Kokocinski F."/>
            <person name="McDonald L."/>
            <person name="Evans R."/>
            <person name="Phillips K."/>
            <person name="Atkinson A."/>
            <person name="Cooper R."/>
            <person name="Jones C."/>
            <person name="Hall R.E."/>
            <person name="Andrews T.D."/>
            <person name="Lloyd C."/>
            <person name="Ainscough R."/>
            <person name="Almeida J.P."/>
            <person name="Ambrose K.D."/>
            <person name="Anderson F."/>
            <person name="Andrew R.W."/>
            <person name="Ashwell R.I.S."/>
            <person name="Aubin K."/>
            <person name="Babbage A.K."/>
            <person name="Bagguley C.L."/>
            <person name="Bailey J."/>
            <person name="Beasley H."/>
            <person name="Bethel G."/>
            <person name="Bird C.P."/>
            <person name="Bray-Allen S."/>
            <person name="Brown J.Y."/>
            <person name="Brown A.J."/>
            <person name="Buckley D."/>
            <person name="Burton J."/>
            <person name="Bye J."/>
            <person name="Carder C."/>
            <person name="Chapman J.C."/>
            <person name="Clark S.Y."/>
            <person name="Clarke G."/>
            <person name="Clee C."/>
            <person name="Cobley V."/>
            <person name="Collier R.E."/>
            <person name="Corby N."/>
            <person name="Coville G.J."/>
            <person name="Davies J."/>
            <person name="Deadman R."/>
            <person name="Dunn M."/>
            <person name="Earthrowl M."/>
            <person name="Ellington A.G."/>
            <person name="Errington H."/>
            <person name="Frankish A."/>
            <person name="Frankland J."/>
            <person name="French L."/>
            <person name="Garner P."/>
            <person name="Garnett J."/>
            <person name="Gay L."/>
            <person name="Ghori M.R.J."/>
            <person name="Gibson R."/>
            <person name="Gilby L.M."/>
            <person name="Gillett W."/>
            <person name="Glithero R.J."/>
            <person name="Grafham D.V."/>
            <person name="Griffiths C."/>
            <person name="Griffiths-Jones S."/>
            <person name="Grocock R."/>
            <person name="Hammond S."/>
            <person name="Harrison E.S.I."/>
            <person name="Hart E."/>
            <person name="Haugen E."/>
            <person name="Heath P.D."/>
            <person name="Holmes S."/>
            <person name="Holt K."/>
            <person name="Howden P.J."/>
            <person name="Hunt A.R."/>
            <person name="Hunt S.E."/>
            <person name="Hunter G."/>
            <person name="Isherwood J."/>
            <person name="James R."/>
            <person name="Johnson C."/>
            <person name="Johnson D."/>
            <person name="Joy A."/>
            <person name="Kay M."/>
            <person name="Kershaw J.K."/>
            <person name="Kibukawa M."/>
            <person name="Kimberley A.M."/>
            <person name="King A."/>
            <person name="Knights A.J."/>
            <person name="Lad H."/>
            <person name="Laird G."/>
            <person name="Lawlor S."/>
            <person name="Leongamornlert D.A."/>
            <person name="Lloyd D.M."/>
            <person name="Loveland J."/>
            <person name="Lovell J."/>
            <person name="Lush M.J."/>
            <person name="Lyne R."/>
            <person name="Martin S."/>
            <person name="Mashreghi-Mohammadi M."/>
            <person name="Matthews L."/>
            <person name="Matthews N.S.W."/>
            <person name="McLaren S."/>
            <person name="Milne S."/>
            <person name="Mistry S."/>
            <person name="Moore M.J.F."/>
            <person name="Nickerson T."/>
            <person name="O'Dell C.N."/>
            <person name="Oliver K."/>
            <person name="Palmeiri A."/>
            <person name="Palmer S.A."/>
            <person name="Parker A."/>
            <person name="Patel D."/>
            <person name="Pearce A.V."/>
            <person name="Peck A.I."/>
            <person name="Pelan S."/>
            <person name="Phelps K."/>
            <person name="Phillimore B.J."/>
            <person name="Plumb R."/>
            <person name="Rajan J."/>
            <person name="Raymond C."/>
            <person name="Rouse G."/>
            <person name="Saenphimmachak C."/>
            <person name="Sehra H.K."/>
            <person name="Sheridan E."/>
            <person name="Shownkeen R."/>
            <person name="Sims S."/>
            <person name="Skuce C.D."/>
            <person name="Smith M."/>
            <person name="Steward C."/>
            <person name="Subramanian S."/>
            <person name="Sycamore N."/>
            <person name="Tracey A."/>
            <person name="Tromans A."/>
            <person name="Van Helmond Z."/>
            <person name="Wall M."/>
            <person name="Wallis J.M."/>
            <person name="White S."/>
            <person name="Whitehead S.L."/>
            <person name="Wilkinson J.E."/>
            <person name="Willey D.L."/>
            <person name="Williams H."/>
            <person name="Wilming L."/>
            <person name="Wray P.W."/>
            <person name="Wu Z."/>
            <person name="Coulson A."/>
            <person name="Vaudin M."/>
            <person name="Sulston J.E."/>
            <person name="Durbin R.M."/>
            <person name="Hubbard T."/>
            <person name="Wooster R."/>
            <person name="Dunham I."/>
            <person name="Carter N.P."/>
            <person name="McVean G."/>
            <person name="Ross M.T."/>
            <person name="Harrow J."/>
            <person name="Olson M.V."/>
            <person name="Beck S."/>
            <person name="Rogers J."/>
            <person name="Bentley D.R."/>
        </authorList>
    </citation>
    <scope>NUCLEOTIDE SEQUENCE [LARGE SCALE GENOMIC DNA]</scope>
</reference>
<reference key="3">
    <citation type="submission" date="2005-09" db="EMBL/GenBank/DDBJ databases">
        <authorList>
            <person name="Mural R.J."/>
            <person name="Istrail S."/>
            <person name="Sutton G.G."/>
            <person name="Florea L."/>
            <person name="Halpern A.L."/>
            <person name="Mobarry C.M."/>
            <person name="Lippert R."/>
            <person name="Walenz B."/>
            <person name="Shatkay H."/>
            <person name="Dew I."/>
            <person name="Miller J.R."/>
            <person name="Flanigan M.J."/>
            <person name="Edwards N.J."/>
            <person name="Bolanos R."/>
            <person name="Fasulo D."/>
            <person name="Halldorsson B.V."/>
            <person name="Hannenhalli S."/>
            <person name="Turner R."/>
            <person name="Yooseph S."/>
            <person name="Lu F."/>
            <person name="Nusskern D.R."/>
            <person name="Shue B.C."/>
            <person name="Zheng X.H."/>
            <person name="Zhong F."/>
            <person name="Delcher A.L."/>
            <person name="Huson D.H."/>
            <person name="Kravitz S.A."/>
            <person name="Mouchard L."/>
            <person name="Reinert K."/>
            <person name="Remington K.A."/>
            <person name="Clark A.G."/>
            <person name="Waterman M.S."/>
            <person name="Eichler E.E."/>
            <person name="Adams M.D."/>
            <person name="Hunkapiller M.W."/>
            <person name="Myers E.W."/>
            <person name="Venter J.C."/>
        </authorList>
    </citation>
    <scope>NUCLEOTIDE SEQUENCE [LARGE SCALE GENOMIC DNA]</scope>
</reference>
<reference key="4">
    <citation type="journal article" date="2004" name="Genome Res.">
        <title>The status, quality, and expansion of the NIH full-length cDNA project: the Mammalian Gene Collection (MGC).</title>
        <authorList>
            <consortium name="The MGC Project Team"/>
        </authorList>
    </citation>
    <scope>NUCLEOTIDE SEQUENCE [LARGE SCALE MRNA]</scope>
    <source>
        <tissue>Lung</tissue>
    </source>
</reference>
<reference key="5">
    <citation type="journal article" date="2002" name="J. Biol. Chem.">
        <title>Correlation of transcriptional repression by p21(SNFT) with changes in DNA.NF-AT complex interactions.</title>
        <authorList>
            <person name="Bower K.E."/>
            <person name="Zeller R.W."/>
            <person name="Wachsman W."/>
            <person name="Martinez T."/>
            <person name="McGuire K.L."/>
        </authorList>
    </citation>
    <scope>FUNCTION</scope>
    <scope>SUBCELLULAR LOCATION</scope>
    <scope>INTERACTION WITH JUN</scope>
</reference>
<reference key="6">
    <citation type="journal article" date="2004" name="Oncogene">
        <title>Transcriptional repression of MMP-1 by p21SNFT and reduced in vitro invasiveness of hepatocarcinoma cells.</title>
        <authorList>
            <person name="Bower K.E."/>
            <person name="Fritz J.M."/>
            <person name="McGuire K.L."/>
        </authorList>
    </citation>
    <scope>FUNCTION</scope>
</reference>
<reference key="7">
    <citation type="journal article" date="2009" name="Sci. Signal.">
        <title>Quantitative phosphoproteomic analysis of T cell receptor signaling reveals system-wide modulation of protein-protein interactions.</title>
        <authorList>
            <person name="Mayya V."/>
            <person name="Lundgren D.H."/>
            <person name="Hwang S.-I."/>
            <person name="Rezaul K."/>
            <person name="Wu L."/>
            <person name="Eng J.K."/>
            <person name="Rodionov V."/>
            <person name="Han D.K."/>
        </authorList>
    </citation>
    <scope>PHOSPHORYLATION [LARGE SCALE ANALYSIS] AT SER-31</scope>
    <scope>IDENTIFICATION BY MASS SPECTROMETRY [LARGE SCALE ANALYSIS]</scope>
    <source>
        <tissue>Leukemic T-cell</tissue>
    </source>
</reference>
<reference key="8">
    <citation type="journal article" date="2013" name="J. Proteome Res.">
        <title>Toward a comprehensive characterization of a human cancer cell phosphoproteome.</title>
        <authorList>
            <person name="Zhou H."/>
            <person name="Di Palma S."/>
            <person name="Preisinger C."/>
            <person name="Peng M."/>
            <person name="Polat A.N."/>
            <person name="Heck A.J."/>
            <person name="Mohammed S."/>
        </authorList>
    </citation>
    <scope>PHOSPHORYLATION [LARGE SCALE ANALYSIS] AT SER-2 AND SER-31</scope>
    <scope>IDENTIFICATION BY MASS SPECTROMETRY [LARGE SCALE ANALYSIS]</scope>
    <source>
        <tissue>Erythroleukemia</tissue>
    </source>
</reference>
<dbReference type="EMBL" id="AF255346">
    <property type="protein sequence ID" value="AAF73966.1"/>
    <property type="molecule type" value="mRNA"/>
</dbReference>
<dbReference type="EMBL" id="AL591647">
    <property type="status" value="NOT_ANNOTATED_CDS"/>
    <property type="molecule type" value="Genomic_DNA"/>
</dbReference>
<dbReference type="EMBL" id="CH471100">
    <property type="protein sequence ID" value="EAW93381.1"/>
    <property type="molecule type" value="Genomic_DNA"/>
</dbReference>
<dbReference type="EMBL" id="BC117489">
    <property type="protein sequence ID" value="AAI17490.1"/>
    <property type="molecule type" value="mRNA"/>
</dbReference>
<dbReference type="EMBL" id="BC117491">
    <property type="protein sequence ID" value="AAI17492.1"/>
    <property type="molecule type" value="mRNA"/>
</dbReference>
<dbReference type="CCDS" id="CCDS1508.1"/>
<dbReference type="RefSeq" id="NP_061134.1">
    <property type="nucleotide sequence ID" value="NM_018664.3"/>
</dbReference>
<dbReference type="SMR" id="Q9NR55"/>
<dbReference type="BioGRID" id="120689">
    <property type="interactions" value="56"/>
</dbReference>
<dbReference type="ComplexPortal" id="CPX-6414">
    <property type="entry name" value="bZIP transcription factor complex, ATF2-BATF3"/>
</dbReference>
<dbReference type="ComplexPortal" id="CPX-6468">
    <property type="entry name" value="bZIP transcription factor complex, ATF3-BATF3"/>
</dbReference>
<dbReference type="ComplexPortal" id="CPX-6524">
    <property type="entry name" value="bZIP transcription factor complex, ATF4-BATF3"/>
</dbReference>
<dbReference type="ComplexPortal" id="CPX-7018">
    <property type="entry name" value="bZIP transcription factor complex, BATF-BATF3"/>
</dbReference>
<dbReference type="ComplexPortal" id="CPX-7092">
    <property type="entry name" value="bZIP transcription factor complex, BATF3-BATF3"/>
</dbReference>
<dbReference type="ComplexPortal" id="CPX-7093">
    <property type="entry name" value="bZIP transcription factor complex, BACH2-BATF3"/>
</dbReference>
<dbReference type="ComplexPortal" id="CPX-7095">
    <property type="entry name" value="bZIP transcription factor complex, BATF3-CEBPA"/>
</dbReference>
<dbReference type="ComplexPortal" id="CPX-7096">
    <property type="entry name" value="bZIP transcription factor complex, BATF3-CEBPB"/>
</dbReference>
<dbReference type="ComplexPortal" id="CPX-7097">
    <property type="entry name" value="bZIP transcription factor complex, BATF3-CEBPG"/>
</dbReference>
<dbReference type="ComplexPortal" id="CPX-7098">
    <property type="entry name" value="bZIP transcription factor complex, BATF3-CEBPD"/>
</dbReference>
<dbReference type="ComplexPortal" id="CPX-7099">
    <property type="entry name" value="bZIP transcription factor complex, BATF3-CEBPE"/>
</dbReference>
<dbReference type="ComplexPortal" id="CPX-7100">
    <property type="entry name" value="bZIP transcription factor complex, BATF3-JUN"/>
</dbReference>
<dbReference type="ComplexPortal" id="CPX-7101">
    <property type="entry name" value="bZIP transcription factor complex, BATF3-JUNB"/>
</dbReference>
<dbReference type="ComplexPortal" id="CPX-7102">
    <property type="entry name" value="bZIP transcription factor complex, BATF3-JUND"/>
</dbReference>
<dbReference type="ComplexPortal" id="CPX-7103">
    <property type="entry name" value="bZIP transcription factor complex, BATF3-MAFF"/>
</dbReference>
<dbReference type="ComplexPortal" id="CPX-7105">
    <property type="entry name" value="bZIP transcription factor complex, BATF3-MAFG"/>
</dbReference>
<dbReference type="ComplexPortal" id="CPX-7106">
    <property type="entry name" value="bZIP transcription factor complex, BATF3-DDIT3"/>
</dbReference>
<dbReference type="ComplexPortal" id="CPX-7107">
    <property type="entry name" value="bZIP transcription factor complex, BATF3-HLF"/>
</dbReference>
<dbReference type="ComplexPortal" id="CPX-7108">
    <property type="entry name" value="bZIP transcription factor complex, BATF3-DBP"/>
</dbReference>
<dbReference type="ComplexPortal" id="CPX-7109">
    <property type="entry name" value="bZIP transcription factor complex, BATF3-CREB3"/>
</dbReference>
<dbReference type="FunCoup" id="Q9NR55">
    <property type="interactions" value="942"/>
</dbReference>
<dbReference type="IntAct" id="Q9NR55">
    <property type="interactions" value="58"/>
</dbReference>
<dbReference type="MINT" id="Q9NR55"/>
<dbReference type="STRING" id="9606.ENSP00000243440"/>
<dbReference type="iPTMnet" id="Q9NR55"/>
<dbReference type="PhosphoSitePlus" id="Q9NR55"/>
<dbReference type="BioMuta" id="BATF3"/>
<dbReference type="DMDM" id="74752916"/>
<dbReference type="jPOST" id="Q9NR55"/>
<dbReference type="MassIVE" id="Q9NR55"/>
<dbReference type="PaxDb" id="9606-ENSP00000243440"/>
<dbReference type="PeptideAtlas" id="Q9NR55"/>
<dbReference type="ProteomicsDB" id="82278"/>
<dbReference type="Antibodypedia" id="34609">
    <property type="antibodies" value="151 antibodies from 24 providers"/>
</dbReference>
<dbReference type="DNASU" id="55509"/>
<dbReference type="Ensembl" id="ENST00000243440.2">
    <property type="protein sequence ID" value="ENSP00000243440.1"/>
    <property type="gene ID" value="ENSG00000123685.9"/>
</dbReference>
<dbReference type="GeneID" id="55509"/>
<dbReference type="KEGG" id="hsa:55509"/>
<dbReference type="MANE-Select" id="ENST00000243440.2">
    <property type="protein sequence ID" value="ENSP00000243440.1"/>
    <property type="RefSeq nucleotide sequence ID" value="NM_018664.3"/>
    <property type="RefSeq protein sequence ID" value="NP_061134.1"/>
</dbReference>
<dbReference type="UCSC" id="uc001hjl.3">
    <property type="organism name" value="human"/>
</dbReference>
<dbReference type="AGR" id="HGNC:28915"/>
<dbReference type="CTD" id="55509"/>
<dbReference type="DisGeNET" id="55509"/>
<dbReference type="GeneCards" id="BATF3"/>
<dbReference type="HGNC" id="HGNC:28915">
    <property type="gene designation" value="BATF3"/>
</dbReference>
<dbReference type="HPA" id="ENSG00000123685">
    <property type="expression patterns" value="Tissue enhanced (choroid)"/>
</dbReference>
<dbReference type="MalaCards" id="BATF3"/>
<dbReference type="MIM" id="612470">
    <property type="type" value="gene"/>
</dbReference>
<dbReference type="neXtProt" id="NX_Q9NR55"/>
<dbReference type="OpenTargets" id="ENSG00000123685"/>
<dbReference type="PharmGKB" id="PA162377349"/>
<dbReference type="VEuPathDB" id="HostDB:ENSG00000123685"/>
<dbReference type="eggNOG" id="KOG1414">
    <property type="taxonomic scope" value="Eukaryota"/>
</dbReference>
<dbReference type="GeneTree" id="ENSGT00940000161120"/>
<dbReference type="HOGENOM" id="CLU_088612_1_1_1"/>
<dbReference type="InParanoid" id="Q9NR55"/>
<dbReference type="OMA" id="RNHEKIC"/>
<dbReference type="OrthoDB" id="295274at2759"/>
<dbReference type="PAN-GO" id="Q9NR55">
    <property type="GO annotations" value="4 GO annotations based on evolutionary models"/>
</dbReference>
<dbReference type="PhylomeDB" id="Q9NR55"/>
<dbReference type="TreeFam" id="TF332340"/>
<dbReference type="PathwayCommons" id="Q9NR55"/>
<dbReference type="SignaLink" id="Q9NR55"/>
<dbReference type="BioGRID-ORCS" id="55509">
    <property type="hits" value="11 hits in 1161 CRISPR screens"/>
</dbReference>
<dbReference type="ChiTaRS" id="BATF3">
    <property type="organism name" value="human"/>
</dbReference>
<dbReference type="GenomeRNAi" id="55509"/>
<dbReference type="Pharos" id="Q9NR55">
    <property type="development level" value="Tbio"/>
</dbReference>
<dbReference type="PRO" id="PR:Q9NR55"/>
<dbReference type="Proteomes" id="UP000005640">
    <property type="component" value="Chromosome 1"/>
</dbReference>
<dbReference type="RNAct" id="Q9NR55">
    <property type="molecule type" value="protein"/>
</dbReference>
<dbReference type="Bgee" id="ENSG00000123685">
    <property type="expression patterns" value="Expressed in male germ line stem cell (sensu Vertebrata) in testis and 125 other cell types or tissues"/>
</dbReference>
<dbReference type="GO" id="GO:0000785">
    <property type="term" value="C:chromatin"/>
    <property type="evidence" value="ECO:0000247"/>
    <property type="project" value="NTNU_SB"/>
</dbReference>
<dbReference type="GO" id="GO:0005829">
    <property type="term" value="C:cytosol"/>
    <property type="evidence" value="ECO:0000314"/>
    <property type="project" value="HPA"/>
</dbReference>
<dbReference type="GO" id="GO:0005730">
    <property type="term" value="C:nucleolus"/>
    <property type="evidence" value="ECO:0000314"/>
    <property type="project" value="HPA"/>
</dbReference>
<dbReference type="GO" id="GO:0005654">
    <property type="term" value="C:nucleoplasm"/>
    <property type="evidence" value="ECO:0000314"/>
    <property type="project" value="HPA"/>
</dbReference>
<dbReference type="GO" id="GO:0005634">
    <property type="term" value="C:nucleus"/>
    <property type="evidence" value="ECO:0000318"/>
    <property type="project" value="GO_Central"/>
</dbReference>
<dbReference type="GO" id="GO:0090575">
    <property type="term" value="C:RNA polymerase II transcription regulator complex"/>
    <property type="evidence" value="ECO:0000353"/>
    <property type="project" value="ComplexPortal"/>
</dbReference>
<dbReference type="GO" id="GO:0003700">
    <property type="term" value="F:DNA-binding transcription factor activity"/>
    <property type="evidence" value="ECO:0000304"/>
    <property type="project" value="ProtInc"/>
</dbReference>
<dbReference type="GO" id="GO:0000981">
    <property type="term" value="F:DNA-binding transcription factor activity, RNA polymerase II-specific"/>
    <property type="evidence" value="ECO:0000247"/>
    <property type="project" value="NTNU_SB"/>
</dbReference>
<dbReference type="GO" id="GO:0001227">
    <property type="term" value="F:DNA-binding transcription repressor activity, RNA polymerase II-specific"/>
    <property type="evidence" value="ECO:0000314"/>
    <property type="project" value="NTNU_SB"/>
</dbReference>
<dbReference type="GO" id="GO:0000978">
    <property type="term" value="F:RNA polymerase II cis-regulatory region sequence-specific DNA binding"/>
    <property type="evidence" value="ECO:0000314"/>
    <property type="project" value="NTNU_SB"/>
</dbReference>
<dbReference type="GO" id="GO:1990837">
    <property type="term" value="F:sequence-specific double-stranded DNA binding"/>
    <property type="evidence" value="ECO:0000314"/>
    <property type="project" value="ARUK-UCL"/>
</dbReference>
<dbReference type="GO" id="GO:0097028">
    <property type="term" value="P:dendritic cell differentiation"/>
    <property type="evidence" value="ECO:0000250"/>
    <property type="project" value="UniProtKB"/>
</dbReference>
<dbReference type="GO" id="GO:0140467">
    <property type="term" value="P:integrated stress response signaling"/>
    <property type="evidence" value="ECO:0000303"/>
    <property type="project" value="ComplexPortal"/>
</dbReference>
<dbReference type="GO" id="GO:0043011">
    <property type="term" value="P:myeloid dendritic cell differentiation"/>
    <property type="evidence" value="ECO:0000250"/>
    <property type="project" value="UniProtKB"/>
</dbReference>
<dbReference type="GO" id="GO:0000122">
    <property type="term" value="P:negative regulation of transcription by RNA polymerase II"/>
    <property type="evidence" value="ECO:0000314"/>
    <property type="project" value="NTNU_SB"/>
</dbReference>
<dbReference type="GO" id="GO:0006357">
    <property type="term" value="P:regulation of transcription by RNA polymerase II"/>
    <property type="evidence" value="ECO:0000318"/>
    <property type="project" value="GO_Central"/>
</dbReference>
<dbReference type="GO" id="GO:0009615">
    <property type="term" value="P:response to virus"/>
    <property type="evidence" value="ECO:0000250"/>
    <property type="project" value="UniProtKB"/>
</dbReference>
<dbReference type="FunFam" id="1.20.5.170:FF:000043">
    <property type="entry name" value="Basic leucine zipper transcriptional factor ATF-like"/>
    <property type="match status" value="1"/>
</dbReference>
<dbReference type="Gene3D" id="1.20.5.170">
    <property type="match status" value="1"/>
</dbReference>
<dbReference type="InterPro" id="IPR000837">
    <property type="entry name" value="AP-1"/>
</dbReference>
<dbReference type="InterPro" id="IPR004827">
    <property type="entry name" value="bZIP"/>
</dbReference>
<dbReference type="InterPro" id="IPR046347">
    <property type="entry name" value="bZIP_sf"/>
</dbReference>
<dbReference type="PANTHER" id="PTHR23351:SF13">
    <property type="entry name" value="BASIC LEUCINE ZIPPER TRANSCRIPTIONAL FACTOR ATF-LIKE 3"/>
    <property type="match status" value="1"/>
</dbReference>
<dbReference type="PANTHER" id="PTHR23351">
    <property type="entry name" value="FOS TRANSCRIPTION FACTOR-RELATED"/>
    <property type="match status" value="1"/>
</dbReference>
<dbReference type="Pfam" id="PF00170">
    <property type="entry name" value="bZIP_1"/>
    <property type="match status" value="1"/>
</dbReference>
<dbReference type="PRINTS" id="PR00042">
    <property type="entry name" value="LEUZIPPRFOS"/>
</dbReference>
<dbReference type="SMART" id="SM00338">
    <property type="entry name" value="BRLZ"/>
    <property type="match status" value="1"/>
</dbReference>
<dbReference type="SUPFAM" id="SSF57959">
    <property type="entry name" value="Leucine zipper domain"/>
    <property type="match status" value="1"/>
</dbReference>
<dbReference type="PROSITE" id="PS50217">
    <property type="entry name" value="BZIP"/>
    <property type="match status" value="1"/>
</dbReference>
<dbReference type="PROSITE" id="PS00036">
    <property type="entry name" value="BZIP_BASIC"/>
    <property type="match status" value="1"/>
</dbReference>
<evidence type="ECO:0000250" key="1"/>
<evidence type="ECO:0000255" key="2">
    <source>
        <dbReference type="PROSITE-ProRule" id="PRU00978"/>
    </source>
</evidence>
<evidence type="ECO:0000256" key="3">
    <source>
        <dbReference type="SAM" id="MobiDB-lite"/>
    </source>
</evidence>
<evidence type="ECO:0000269" key="4">
    <source>
    </source>
</evidence>
<evidence type="ECO:0000269" key="5">
    <source>
    </source>
</evidence>
<evidence type="ECO:0000269" key="6">
    <source>
    </source>
</evidence>
<evidence type="ECO:0000305" key="7"/>
<evidence type="ECO:0007744" key="8">
    <source>
    </source>
</evidence>
<evidence type="ECO:0007744" key="9">
    <source>
    </source>
</evidence>
<gene>
    <name type="primary">BATF3</name>
    <name type="synonym">SNFT</name>
</gene>
<name>BATF3_HUMAN</name>
<accession>Q9NR55</accession>
<comment type="function">
    <text evidence="1 4 5 6">AP-1 family transcription factor that controls the differentiation of CD8(+) thymic conventional dendritic cells in the immune system. Required for development of CD8-alpha(+) classical dendritic cells (cDCs) and related CD103(+) dendritic cells that cross-present antigens to CD8 T-cells and produce interleukin-12 (IL12) in response to pathogens (By similarity). Acts via the formation of a heterodimer with JUN family proteins that recognizes and binds DNA sequence 5'-TGA[CG]TCA-3' and regulates expression of target genes.</text>
</comment>
<comment type="subunit">
    <text evidence="5">Heterodimer; heterodimerizes with JUN family proteins. Interacts with JUN.</text>
</comment>
<comment type="interaction">
    <interactant intactId="EBI-10312707">
        <id>Q9NR55</id>
    </interactant>
    <interactant intactId="EBI-727098">
        <id>P21549</id>
        <label>AGXT</label>
    </interactant>
    <organismsDiffer>false</organismsDiffer>
    <experiments>3</experiments>
</comment>
<comment type="interaction">
    <interactant intactId="EBI-10312707">
        <id>Q9NR55</id>
    </interactant>
    <interactant intactId="EBI-1170906">
        <id>P15336</id>
        <label>ATF2</label>
    </interactant>
    <organismsDiffer>false</organismsDiffer>
    <experiments>5</experiments>
</comment>
<comment type="interaction">
    <interactant intactId="EBI-10312707">
        <id>Q9NR55</id>
    </interactant>
    <interactant intactId="EBI-712767">
        <id>P18847</id>
        <label>ATF3</label>
    </interactant>
    <organismsDiffer>false</organismsDiffer>
    <experiments>5</experiments>
</comment>
<comment type="interaction">
    <interactant intactId="EBI-10312707">
        <id>Q9NR55</id>
    </interactant>
    <interactant intactId="EBI-492498">
        <id>P18848</id>
        <label>ATF4</label>
    </interactant>
    <organismsDiffer>false</organismsDiffer>
    <experiments>2</experiments>
</comment>
<comment type="interaction">
    <interactant intactId="EBI-10312707">
        <id>Q9NR55</id>
    </interactant>
    <interactant intactId="EBI-1642333">
        <id>Q9BYV9</id>
        <label>BACH2</label>
    </interactant>
    <organismsDiffer>false</organismsDiffer>
    <experiments>6</experiments>
</comment>
<comment type="interaction">
    <interactant intactId="EBI-10312707">
        <id>Q9NR55</id>
    </interactant>
    <interactant intactId="EBI-1172054">
        <id>P49715</id>
        <label>CEBPA</label>
    </interactant>
    <organismsDiffer>false</organismsDiffer>
    <experiments>2</experiments>
</comment>
<comment type="interaction">
    <interactant intactId="EBI-10312707">
        <id>Q9NR55</id>
    </interactant>
    <interactant intactId="EBI-3907048">
        <id>Q15744</id>
        <label>CEBPE</label>
    </interactant>
    <organismsDiffer>false</organismsDiffer>
    <experiments>2</experiments>
</comment>
<comment type="interaction">
    <interactant intactId="EBI-10312707">
        <id>Q9NR55</id>
    </interactant>
    <interactant intactId="EBI-740209">
        <id>P53567</id>
        <label>CEBPG</label>
    </interactant>
    <organismsDiffer>false</organismsDiffer>
    <experiments>3</experiments>
</comment>
<comment type="interaction">
    <interactant intactId="EBI-10312707">
        <id>Q9NR55</id>
    </interactant>
    <interactant intactId="EBI-10192698">
        <id>Q02930-3</id>
        <label>CREB5</label>
    </interactant>
    <organismsDiffer>false</organismsDiffer>
    <experiments>5</experiments>
</comment>
<comment type="interaction">
    <interactant intactId="EBI-10312707">
        <id>Q9NR55</id>
    </interactant>
    <interactant intactId="EBI-3908088">
        <id>Q10586</id>
        <label>DBP</label>
    </interactant>
    <organismsDiffer>false</organismsDiffer>
    <experiments>2</experiments>
</comment>
<comment type="interaction">
    <interactant intactId="EBI-10312707">
        <id>Q9NR55</id>
    </interactant>
    <interactant intactId="EBI-742651">
        <id>P35638</id>
        <label>DDIT3</label>
    </interactant>
    <organismsDiffer>false</organismsDiffer>
    <experiments>8</experiments>
</comment>
<comment type="interaction">
    <interactant intactId="EBI-10312707">
        <id>Q9NR55</id>
    </interactant>
    <interactant intactId="EBI-10173632">
        <id>P35638-2</id>
        <label>DDIT3</label>
    </interactant>
    <organismsDiffer>false</organismsDiffer>
    <experiments>3</experiments>
</comment>
<comment type="interaction">
    <interactant intactId="EBI-10312707">
        <id>Q9NR55</id>
    </interactant>
    <interactant intactId="EBI-744510">
        <id>P15407</id>
        <label>FOSL1</label>
    </interactant>
    <organismsDiffer>false</organismsDiffer>
    <experiments>3</experiments>
</comment>
<comment type="interaction">
    <interactant intactId="EBI-10312707">
        <id>Q9NR55</id>
    </interactant>
    <interactant intactId="EBI-11959863">
        <id>Q9NWQ4-1</id>
        <label>GPATCH2L</label>
    </interactant>
    <organismsDiffer>false</organismsDiffer>
    <experiments>3</experiments>
</comment>
<comment type="interaction">
    <interactant intactId="EBI-10312707">
        <id>Q9NR55</id>
    </interactant>
    <interactant intactId="EBI-2798854">
        <id>Q16534</id>
        <label>HLF</label>
    </interactant>
    <organismsDiffer>false</organismsDiffer>
    <experiments>2</experiments>
</comment>
<comment type="interaction">
    <interactant intactId="EBI-10312707">
        <id>Q9NR55</id>
    </interactant>
    <interactant intactId="EBI-852823">
        <id>P05412</id>
        <label>JUN</label>
    </interactant>
    <organismsDiffer>false</organismsDiffer>
    <experiments>10</experiments>
</comment>
<comment type="interaction">
    <interactant intactId="EBI-10312707">
        <id>Q9NR55</id>
    </interactant>
    <interactant intactId="EBI-748062">
        <id>P17275</id>
        <label>JUNB</label>
    </interactant>
    <organismsDiffer>false</organismsDiffer>
    <experiments>9</experiments>
</comment>
<comment type="interaction">
    <interactant intactId="EBI-10312707">
        <id>Q9NR55</id>
    </interactant>
    <interactant intactId="EBI-2682803">
        <id>P17535</id>
        <label>JUND</label>
    </interactant>
    <organismsDiffer>false</organismsDiffer>
    <experiments>5</experiments>
</comment>
<comment type="interaction">
    <interactant intactId="EBI-10312707">
        <id>Q9NR55</id>
    </interactant>
    <interactant intactId="EBI-721128">
        <id>Q9ULX9</id>
        <label>MAFF</label>
    </interactant>
    <organismsDiffer>false</organismsDiffer>
    <experiments>2</experiments>
</comment>
<comment type="interaction">
    <interactant intactId="EBI-10312707">
        <id>Q9NR55</id>
    </interactant>
    <interactant intactId="EBI-713514">
        <id>O15525</id>
        <label>MAFG</label>
    </interactant>
    <organismsDiffer>false</organismsDiffer>
    <experiments>2</experiments>
</comment>
<comment type="interaction">
    <interactant intactId="EBI-10312707">
        <id>Q9NR55</id>
    </interactant>
    <interactant intactId="EBI-372094">
        <id>Q9BQY4</id>
        <label>RHOXF2</label>
    </interactant>
    <organismsDiffer>false</organismsDiffer>
    <experiments>3</experiments>
</comment>
<comment type="interaction">
    <interactant intactId="EBI-10312707">
        <id>Q9NR55</id>
    </interactant>
    <interactant intactId="EBI-11963196">
        <id>Q15915</id>
        <label>ZIC1</label>
    </interactant>
    <organismsDiffer>false</organismsDiffer>
    <experiments>3</experiments>
</comment>
<comment type="subcellular location">
    <subcellularLocation>
        <location evidence="2 5">Nucleus</location>
    </subcellularLocation>
</comment>
<comment type="similarity">
    <text evidence="7">Belongs to the bZIP family.</text>
</comment>
<sequence length="127" mass="14468">MSQGLPAAGSVLQRSVAAPGNQPQPQPQQQSPEDDDRKVRRREKNRVAAQRSRKKQTQKADKLHEEYESLEQENTMLRREIGKLTEELKHLTEALKEHEKMCPLLLCPMNFVPVPPRPDPVAGCLPR</sequence>
<proteinExistence type="evidence at protein level"/>
<protein>
    <recommendedName>
        <fullName>Basic leucine zipper transcriptional factor ATF-like 3</fullName>
        <shortName>B-ATF-3</shortName>
    </recommendedName>
    <alternativeName>
        <fullName>21 kDa small nuclear factor isolated from T-cells</fullName>
    </alternativeName>
    <alternativeName>
        <fullName>Jun dimerization protein p21SNFT</fullName>
    </alternativeName>
</protein>
<feature type="chain" id="PRO_0000326106" description="Basic leucine zipper transcriptional factor ATF-like 3">
    <location>
        <begin position="1"/>
        <end position="127"/>
    </location>
</feature>
<feature type="domain" description="bZIP" evidence="2">
    <location>
        <begin position="35"/>
        <end position="98"/>
    </location>
</feature>
<feature type="region of interest" description="Disordered" evidence="3">
    <location>
        <begin position="1"/>
        <end position="72"/>
    </location>
</feature>
<feature type="region of interest" description="Basic motif" evidence="2">
    <location>
        <begin position="37"/>
        <end position="62"/>
    </location>
</feature>
<feature type="region of interest" description="Leucine-zipper" evidence="2">
    <location>
        <begin position="63"/>
        <end position="91"/>
    </location>
</feature>
<feature type="compositionally biased region" description="Basic and acidic residues" evidence="3">
    <location>
        <begin position="58"/>
        <end position="67"/>
    </location>
</feature>
<feature type="modified residue" description="Phosphoserine" evidence="9">
    <location>
        <position position="2"/>
    </location>
</feature>
<feature type="modified residue" description="Phosphoserine" evidence="8 9">
    <location>
        <position position="31"/>
    </location>
</feature>
<feature type="sequence variant" id="VAR_039988" description="In dbSNP:rs2202683.">
    <original>V</original>
    <variation>I</variation>
    <location>
        <position position="11"/>
    </location>
</feature>